<sequence>MVMTDPIADLLTRIRNANMVRHEKLEVPASKIKREIAEILKREGFIRDVEYVEDSKQGIIRMFLKYGQNNERVITGLKRISKPGLRVYAKSNEVPRVLNGLGIAIISTSQGVLSDKEARAKQAGGEVLAYVW</sequence>
<comment type="function">
    <text evidence="1">One of the primary rRNA binding proteins, it binds directly to 16S rRNA central domain where it helps coordinate assembly of the platform of the 30S subunit.</text>
</comment>
<comment type="subunit">
    <text evidence="1">Part of the 30S ribosomal subunit. Contacts proteins S5 and S12.</text>
</comment>
<comment type="similarity">
    <text evidence="1">Belongs to the universal ribosomal protein uS8 family.</text>
</comment>
<keyword id="KW-0687">Ribonucleoprotein</keyword>
<keyword id="KW-0689">Ribosomal protein</keyword>
<keyword id="KW-0694">RNA-binding</keyword>
<keyword id="KW-0699">rRNA-binding</keyword>
<gene>
    <name evidence="1" type="primary">rpsH</name>
    <name type="ordered locus">BPUM_0116</name>
</gene>
<name>RS8_BACP2</name>
<proteinExistence type="inferred from homology"/>
<evidence type="ECO:0000255" key="1">
    <source>
        <dbReference type="HAMAP-Rule" id="MF_01302"/>
    </source>
</evidence>
<evidence type="ECO:0000305" key="2"/>
<organism>
    <name type="scientific">Bacillus pumilus (strain SAFR-032)</name>
    <dbReference type="NCBI Taxonomy" id="315750"/>
    <lineage>
        <taxon>Bacteria</taxon>
        <taxon>Bacillati</taxon>
        <taxon>Bacillota</taxon>
        <taxon>Bacilli</taxon>
        <taxon>Bacillales</taxon>
        <taxon>Bacillaceae</taxon>
        <taxon>Bacillus</taxon>
    </lineage>
</organism>
<reference key="1">
    <citation type="journal article" date="2007" name="PLoS ONE">
        <title>Paradoxical DNA repair and peroxide resistance gene conservation in Bacillus pumilus SAFR-032.</title>
        <authorList>
            <person name="Gioia J."/>
            <person name="Yerrapragada S."/>
            <person name="Qin X."/>
            <person name="Jiang H."/>
            <person name="Igboeli O.C."/>
            <person name="Muzny D."/>
            <person name="Dugan-Rocha S."/>
            <person name="Ding Y."/>
            <person name="Hawes A."/>
            <person name="Liu W."/>
            <person name="Perez L."/>
            <person name="Kovar C."/>
            <person name="Dinh H."/>
            <person name="Lee S."/>
            <person name="Nazareth L."/>
            <person name="Blyth P."/>
            <person name="Holder M."/>
            <person name="Buhay C."/>
            <person name="Tirumalai M.R."/>
            <person name="Liu Y."/>
            <person name="Dasgupta I."/>
            <person name="Bokhetache L."/>
            <person name="Fujita M."/>
            <person name="Karouia F."/>
            <person name="Eswara Moorthy P."/>
            <person name="Siefert J."/>
            <person name="Uzman A."/>
            <person name="Buzumbo P."/>
            <person name="Verma A."/>
            <person name="Zwiya H."/>
            <person name="McWilliams B.D."/>
            <person name="Olowu A."/>
            <person name="Clinkenbeard K.D."/>
            <person name="Newcombe D."/>
            <person name="Golebiewski L."/>
            <person name="Petrosino J.F."/>
            <person name="Nicholson W.L."/>
            <person name="Fox G.E."/>
            <person name="Venkateswaran K."/>
            <person name="Highlander S.K."/>
            <person name="Weinstock G.M."/>
        </authorList>
    </citation>
    <scope>NUCLEOTIDE SEQUENCE [LARGE SCALE GENOMIC DNA]</scope>
    <source>
        <strain>SAFR-032</strain>
    </source>
</reference>
<feature type="chain" id="PRO_1000067484" description="Small ribosomal subunit protein uS8">
    <location>
        <begin position="1"/>
        <end position="132"/>
    </location>
</feature>
<dbReference type="EMBL" id="CP000813">
    <property type="protein sequence ID" value="ABV60816.1"/>
    <property type="molecule type" value="Genomic_DNA"/>
</dbReference>
<dbReference type="RefSeq" id="WP_003217040.1">
    <property type="nucleotide sequence ID" value="NZ_VEIS01000020.1"/>
</dbReference>
<dbReference type="SMR" id="A8F999"/>
<dbReference type="STRING" id="315750.BPUM_0116"/>
<dbReference type="GeneID" id="5619358"/>
<dbReference type="KEGG" id="bpu:BPUM_0116"/>
<dbReference type="eggNOG" id="COG0096">
    <property type="taxonomic scope" value="Bacteria"/>
</dbReference>
<dbReference type="HOGENOM" id="CLU_098428_0_2_9"/>
<dbReference type="OrthoDB" id="9802617at2"/>
<dbReference type="Proteomes" id="UP000001355">
    <property type="component" value="Chromosome"/>
</dbReference>
<dbReference type="GO" id="GO:1990904">
    <property type="term" value="C:ribonucleoprotein complex"/>
    <property type="evidence" value="ECO:0007669"/>
    <property type="project" value="UniProtKB-KW"/>
</dbReference>
<dbReference type="GO" id="GO:0005840">
    <property type="term" value="C:ribosome"/>
    <property type="evidence" value="ECO:0007669"/>
    <property type="project" value="UniProtKB-KW"/>
</dbReference>
<dbReference type="GO" id="GO:0019843">
    <property type="term" value="F:rRNA binding"/>
    <property type="evidence" value="ECO:0007669"/>
    <property type="project" value="UniProtKB-UniRule"/>
</dbReference>
<dbReference type="GO" id="GO:0003735">
    <property type="term" value="F:structural constituent of ribosome"/>
    <property type="evidence" value="ECO:0007669"/>
    <property type="project" value="InterPro"/>
</dbReference>
<dbReference type="GO" id="GO:0006412">
    <property type="term" value="P:translation"/>
    <property type="evidence" value="ECO:0007669"/>
    <property type="project" value="UniProtKB-UniRule"/>
</dbReference>
<dbReference type="FunFam" id="3.30.1370.30:FF:000002">
    <property type="entry name" value="30S ribosomal protein S8"/>
    <property type="match status" value="1"/>
</dbReference>
<dbReference type="FunFam" id="3.30.1490.10:FF:000001">
    <property type="entry name" value="30S ribosomal protein S8"/>
    <property type="match status" value="1"/>
</dbReference>
<dbReference type="Gene3D" id="3.30.1370.30">
    <property type="match status" value="1"/>
</dbReference>
<dbReference type="Gene3D" id="3.30.1490.10">
    <property type="match status" value="1"/>
</dbReference>
<dbReference type="HAMAP" id="MF_01302_B">
    <property type="entry name" value="Ribosomal_uS8_B"/>
    <property type="match status" value="1"/>
</dbReference>
<dbReference type="InterPro" id="IPR000630">
    <property type="entry name" value="Ribosomal_uS8"/>
</dbReference>
<dbReference type="InterPro" id="IPR047863">
    <property type="entry name" value="Ribosomal_uS8_CS"/>
</dbReference>
<dbReference type="InterPro" id="IPR035987">
    <property type="entry name" value="Ribosomal_uS8_sf"/>
</dbReference>
<dbReference type="NCBIfam" id="NF001109">
    <property type="entry name" value="PRK00136.1"/>
    <property type="match status" value="1"/>
</dbReference>
<dbReference type="PANTHER" id="PTHR11758">
    <property type="entry name" value="40S RIBOSOMAL PROTEIN S15A"/>
    <property type="match status" value="1"/>
</dbReference>
<dbReference type="Pfam" id="PF00410">
    <property type="entry name" value="Ribosomal_S8"/>
    <property type="match status" value="1"/>
</dbReference>
<dbReference type="SUPFAM" id="SSF56047">
    <property type="entry name" value="Ribosomal protein S8"/>
    <property type="match status" value="1"/>
</dbReference>
<dbReference type="PROSITE" id="PS00053">
    <property type="entry name" value="RIBOSOMAL_S8"/>
    <property type="match status" value="1"/>
</dbReference>
<accession>A8F999</accession>
<protein>
    <recommendedName>
        <fullName evidence="1">Small ribosomal subunit protein uS8</fullName>
    </recommendedName>
    <alternativeName>
        <fullName evidence="2">30S ribosomal protein S8</fullName>
    </alternativeName>
</protein>